<gene>
    <name type="primary">rpl22a</name>
    <name type="ORF">DDB_G0290091</name>
</gene>
<organism>
    <name type="scientific">Dictyostelium discoideum</name>
    <name type="common">Social amoeba</name>
    <dbReference type="NCBI Taxonomy" id="44689"/>
    <lineage>
        <taxon>Eukaryota</taxon>
        <taxon>Amoebozoa</taxon>
        <taxon>Evosea</taxon>
        <taxon>Eumycetozoa</taxon>
        <taxon>Dictyostelia</taxon>
        <taxon>Dictyosteliales</taxon>
        <taxon>Dictyosteliaceae</taxon>
        <taxon>Dictyostelium</taxon>
    </lineage>
</organism>
<accession>Q54GK6</accession>
<keyword id="KW-1185">Reference proteome</keyword>
<keyword id="KW-0687">Ribonucleoprotein</keyword>
<keyword id="KW-0689">Ribosomal protein</keyword>
<feature type="chain" id="PRO_0000325943" description="Large ribosomal subunit protein eL22B">
    <location>
        <begin position="1"/>
        <end position="116"/>
    </location>
</feature>
<comment type="similarity">
    <text evidence="1">Belongs to the eukaryotic ribosomal protein eL22 family.</text>
</comment>
<evidence type="ECO:0000305" key="1"/>
<reference key="1">
    <citation type="journal article" date="2005" name="Nature">
        <title>The genome of the social amoeba Dictyostelium discoideum.</title>
        <authorList>
            <person name="Eichinger L."/>
            <person name="Pachebat J.A."/>
            <person name="Gloeckner G."/>
            <person name="Rajandream M.A."/>
            <person name="Sucgang R."/>
            <person name="Berriman M."/>
            <person name="Song J."/>
            <person name="Olsen R."/>
            <person name="Szafranski K."/>
            <person name="Xu Q."/>
            <person name="Tunggal B."/>
            <person name="Kummerfeld S."/>
            <person name="Madera M."/>
            <person name="Konfortov B.A."/>
            <person name="Rivero F."/>
            <person name="Bankier A.T."/>
            <person name="Lehmann R."/>
            <person name="Hamlin N."/>
            <person name="Davies R."/>
            <person name="Gaudet P."/>
            <person name="Fey P."/>
            <person name="Pilcher K."/>
            <person name="Chen G."/>
            <person name="Saunders D."/>
            <person name="Sodergren E.J."/>
            <person name="Davis P."/>
            <person name="Kerhornou A."/>
            <person name="Nie X."/>
            <person name="Hall N."/>
            <person name="Anjard C."/>
            <person name="Hemphill L."/>
            <person name="Bason N."/>
            <person name="Farbrother P."/>
            <person name="Desany B."/>
            <person name="Just E."/>
            <person name="Morio T."/>
            <person name="Rost R."/>
            <person name="Churcher C.M."/>
            <person name="Cooper J."/>
            <person name="Haydock S."/>
            <person name="van Driessche N."/>
            <person name="Cronin A."/>
            <person name="Goodhead I."/>
            <person name="Muzny D.M."/>
            <person name="Mourier T."/>
            <person name="Pain A."/>
            <person name="Lu M."/>
            <person name="Harper D."/>
            <person name="Lindsay R."/>
            <person name="Hauser H."/>
            <person name="James K.D."/>
            <person name="Quiles M."/>
            <person name="Madan Babu M."/>
            <person name="Saito T."/>
            <person name="Buchrieser C."/>
            <person name="Wardroper A."/>
            <person name="Felder M."/>
            <person name="Thangavelu M."/>
            <person name="Johnson D."/>
            <person name="Knights A."/>
            <person name="Loulseged H."/>
            <person name="Mungall K.L."/>
            <person name="Oliver K."/>
            <person name="Price C."/>
            <person name="Quail M.A."/>
            <person name="Urushihara H."/>
            <person name="Hernandez J."/>
            <person name="Rabbinowitsch E."/>
            <person name="Steffen D."/>
            <person name="Sanders M."/>
            <person name="Ma J."/>
            <person name="Kohara Y."/>
            <person name="Sharp S."/>
            <person name="Simmonds M.N."/>
            <person name="Spiegler S."/>
            <person name="Tivey A."/>
            <person name="Sugano S."/>
            <person name="White B."/>
            <person name="Walker D."/>
            <person name="Woodward J.R."/>
            <person name="Winckler T."/>
            <person name="Tanaka Y."/>
            <person name="Shaulsky G."/>
            <person name="Schleicher M."/>
            <person name="Weinstock G.M."/>
            <person name="Rosenthal A."/>
            <person name="Cox E.C."/>
            <person name="Chisholm R.L."/>
            <person name="Gibbs R.A."/>
            <person name="Loomis W.F."/>
            <person name="Platzer M."/>
            <person name="Kay R.R."/>
            <person name="Williams J.G."/>
            <person name="Dear P.H."/>
            <person name="Noegel A.A."/>
            <person name="Barrell B.G."/>
            <person name="Kuspa A."/>
        </authorList>
    </citation>
    <scope>NUCLEOTIDE SEQUENCE [LARGE SCALE GENOMIC DNA]</scope>
    <source>
        <strain>AX4</strain>
    </source>
</reference>
<proteinExistence type="inferred from homology"/>
<sequence length="116" mass="13403">MPNVQKTVVKKSHKFVIDCTAPAGKIVDVAAFEKYLHDRIKVDNKVSNLGSNVVISKDKSKIIINTTIPFSKRYLKYLTKKFLKFKQIRDFLRVVATTKNTYELRYFNIGDSESQE</sequence>
<protein>
    <recommendedName>
        <fullName evidence="1">Large ribosomal subunit protein eL22B</fullName>
    </recommendedName>
    <alternativeName>
        <fullName>60S ribosomal protein L22 2</fullName>
    </alternativeName>
</protein>
<name>RL222_DICDI</name>
<dbReference type="EMBL" id="AAFI02000152">
    <property type="protein sequence ID" value="EAL62406.1"/>
    <property type="molecule type" value="Genomic_DNA"/>
</dbReference>
<dbReference type="RefSeq" id="XP_635911.1">
    <property type="nucleotide sequence ID" value="XM_630819.1"/>
</dbReference>
<dbReference type="SMR" id="Q54GK6"/>
<dbReference type="FunCoup" id="Q54GK6">
    <property type="interactions" value="593"/>
</dbReference>
<dbReference type="STRING" id="44689.Q54GK6"/>
<dbReference type="PaxDb" id="44689-DDB0230147"/>
<dbReference type="EnsemblProtists" id="EAL62406">
    <property type="protein sequence ID" value="EAL62406"/>
    <property type="gene ID" value="DDB_G0290091"/>
</dbReference>
<dbReference type="GeneID" id="8627477"/>
<dbReference type="KEGG" id="ddi:DDB_G0290091"/>
<dbReference type="dictyBase" id="DDB_G0290091">
    <property type="gene designation" value="rpl22a"/>
</dbReference>
<dbReference type="VEuPathDB" id="AmoebaDB:DDB_G0290091"/>
<dbReference type="eggNOG" id="KOG3434">
    <property type="taxonomic scope" value="Eukaryota"/>
</dbReference>
<dbReference type="HOGENOM" id="CLU_105624_0_0_1"/>
<dbReference type="InParanoid" id="Q54GK6"/>
<dbReference type="OMA" id="WIRFIST"/>
<dbReference type="PhylomeDB" id="Q54GK6"/>
<dbReference type="PRO" id="PR:Q54GK6"/>
<dbReference type="Proteomes" id="UP000002195">
    <property type="component" value="Chromosome 5"/>
</dbReference>
<dbReference type="GO" id="GO:1990904">
    <property type="term" value="C:ribonucleoprotein complex"/>
    <property type="evidence" value="ECO:0007669"/>
    <property type="project" value="UniProtKB-KW"/>
</dbReference>
<dbReference type="GO" id="GO:0005840">
    <property type="term" value="C:ribosome"/>
    <property type="evidence" value="ECO:0007669"/>
    <property type="project" value="UniProtKB-KW"/>
</dbReference>
<dbReference type="GO" id="GO:0003723">
    <property type="term" value="F:RNA binding"/>
    <property type="evidence" value="ECO:0000318"/>
    <property type="project" value="GO_Central"/>
</dbReference>
<dbReference type="GO" id="GO:0003735">
    <property type="term" value="F:structural constituent of ribosome"/>
    <property type="evidence" value="ECO:0000318"/>
    <property type="project" value="GO_Central"/>
</dbReference>
<dbReference type="GO" id="GO:0002181">
    <property type="term" value="P:cytoplasmic translation"/>
    <property type="evidence" value="ECO:0000318"/>
    <property type="project" value="GO_Central"/>
</dbReference>
<dbReference type="FunFam" id="3.30.1360.210:FF:000003">
    <property type="entry name" value="60S ribosomal protein L22-B"/>
    <property type="match status" value="1"/>
</dbReference>
<dbReference type="Gene3D" id="3.30.1360.210">
    <property type="match status" value="1"/>
</dbReference>
<dbReference type="InterPro" id="IPR002671">
    <property type="entry name" value="Ribosomal_eL22"/>
</dbReference>
<dbReference type="InterPro" id="IPR038526">
    <property type="entry name" value="Ribosomal_eL22_sf"/>
</dbReference>
<dbReference type="PANTHER" id="PTHR10064">
    <property type="entry name" value="60S RIBOSOMAL PROTEIN L22"/>
    <property type="match status" value="1"/>
</dbReference>
<dbReference type="PANTHER" id="PTHR10064:SF31">
    <property type="entry name" value="LARGE RIBOSOMAL SUBUNIT PROTEIN EL22A-RELATED"/>
    <property type="match status" value="1"/>
</dbReference>
<dbReference type="Pfam" id="PF01776">
    <property type="entry name" value="Ribosomal_L22e"/>
    <property type="match status" value="1"/>
</dbReference>